<dbReference type="EC" id="6.2.1.1" evidence="1"/>
<dbReference type="EMBL" id="AE009442">
    <property type="protein sequence ID" value="AAO29145.1"/>
    <property type="molecule type" value="Genomic_DNA"/>
</dbReference>
<dbReference type="RefSeq" id="WP_004088285.1">
    <property type="nucleotide sequence ID" value="NC_004556.1"/>
</dbReference>
<dbReference type="SMR" id="Q87C00"/>
<dbReference type="GeneID" id="93905110"/>
<dbReference type="KEGG" id="xft:PD_1296"/>
<dbReference type="HOGENOM" id="CLU_000022_3_6_6"/>
<dbReference type="Proteomes" id="UP000002516">
    <property type="component" value="Chromosome"/>
</dbReference>
<dbReference type="GO" id="GO:0005829">
    <property type="term" value="C:cytosol"/>
    <property type="evidence" value="ECO:0007669"/>
    <property type="project" value="TreeGrafter"/>
</dbReference>
<dbReference type="GO" id="GO:0003987">
    <property type="term" value="F:acetate-CoA ligase activity"/>
    <property type="evidence" value="ECO:0007669"/>
    <property type="project" value="UniProtKB-UniRule"/>
</dbReference>
<dbReference type="GO" id="GO:0016208">
    <property type="term" value="F:AMP binding"/>
    <property type="evidence" value="ECO:0007669"/>
    <property type="project" value="InterPro"/>
</dbReference>
<dbReference type="GO" id="GO:0005524">
    <property type="term" value="F:ATP binding"/>
    <property type="evidence" value="ECO:0007669"/>
    <property type="project" value="UniProtKB-KW"/>
</dbReference>
<dbReference type="GO" id="GO:0046872">
    <property type="term" value="F:metal ion binding"/>
    <property type="evidence" value="ECO:0007669"/>
    <property type="project" value="UniProtKB-KW"/>
</dbReference>
<dbReference type="GO" id="GO:0019427">
    <property type="term" value="P:acetyl-CoA biosynthetic process from acetate"/>
    <property type="evidence" value="ECO:0007669"/>
    <property type="project" value="InterPro"/>
</dbReference>
<dbReference type="CDD" id="cd05966">
    <property type="entry name" value="ACS"/>
    <property type="match status" value="1"/>
</dbReference>
<dbReference type="FunFam" id="3.30.300.30:FF:000004">
    <property type="entry name" value="Acetyl-coenzyme A synthetase"/>
    <property type="match status" value="1"/>
</dbReference>
<dbReference type="FunFam" id="3.40.50.12780:FF:000001">
    <property type="entry name" value="Acetyl-coenzyme A synthetase"/>
    <property type="match status" value="1"/>
</dbReference>
<dbReference type="Gene3D" id="3.30.300.30">
    <property type="match status" value="1"/>
</dbReference>
<dbReference type="Gene3D" id="3.40.50.12780">
    <property type="entry name" value="N-terminal domain of ligase-like"/>
    <property type="match status" value="1"/>
</dbReference>
<dbReference type="HAMAP" id="MF_01123">
    <property type="entry name" value="Ac_CoA_synth"/>
    <property type="match status" value="1"/>
</dbReference>
<dbReference type="InterPro" id="IPR011904">
    <property type="entry name" value="Ac_CoA_lig"/>
</dbReference>
<dbReference type="InterPro" id="IPR032387">
    <property type="entry name" value="ACAS_N"/>
</dbReference>
<dbReference type="InterPro" id="IPR025110">
    <property type="entry name" value="AMP-bd_C"/>
</dbReference>
<dbReference type="InterPro" id="IPR045851">
    <property type="entry name" value="AMP-bd_C_sf"/>
</dbReference>
<dbReference type="InterPro" id="IPR020845">
    <property type="entry name" value="AMP-binding_CS"/>
</dbReference>
<dbReference type="InterPro" id="IPR000873">
    <property type="entry name" value="AMP-dep_synth/lig_dom"/>
</dbReference>
<dbReference type="InterPro" id="IPR042099">
    <property type="entry name" value="ANL_N_sf"/>
</dbReference>
<dbReference type="NCBIfam" id="TIGR02188">
    <property type="entry name" value="Ac_CoA_lig_AcsA"/>
    <property type="match status" value="1"/>
</dbReference>
<dbReference type="NCBIfam" id="NF001208">
    <property type="entry name" value="PRK00174.1"/>
    <property type="match status" value="1"/>
</dbReference>
<dbReference type="PANTHER" id="PTHR24095">
    <property type="entry name" value="ACETYL-COENZYME A SYNTHETASE"/>
    <property type="match status" value="1"/>
</dbReference>
<dbReference type="PANTHER" id="PTHR24095:SF14">
    <property type="entry name" value="ACETYL-COENZYME A SYNTHETASE 1"/>
    <property type="match status" value="1"/>
</dbReference>
<dbReference type="Pfam" id="PF16177">
    <property type="entry name" value="ACAS_N"/>
    <property type="match status" value="1"/>
</dbReference>
<dbReference type="Pfam" id="PF00501">
    <property type="entry name" value="AMP-binding"/>
    <property type="match status" value="1"/>
</dbReference>
<dbReference type="Pfam" id="PF13193">
    <property type="entry name" value="AMP-binding_C"/>
    <property type="match status" value="1"/>
</dbReference>
<dbReference type="SUPFAM" id="SSF56801">
    <property type="entry name" value="Acetyl-CoA synthetase-like"/>
    <property type="match status" value="1"/>
</dbReference>
<dbReference type="PROSITE" id="PS00455">
    <property type="entry name" value="AMP_BINDING"/>
    <property type="match status" value="1"/>
</dbReference>
<accession>Q87C00</accession>
<comment type="function">
    <text evidence="1">Catalyzes the conversion of acetate into acetyl-CoA (AcCoA), an essential intermediate at the junction of anabolic and catabolic pathways. AcsA undergoes a two-step reaction. In the first half reaction, AcsA combines acetate with ATP to form acetyl-adenylate (AcAMP) intermediate. In the second half reaction, it can then transfer the acetyl group from AcAMP to the sulfhydryl group of CoA, forming the product AcCoA.</text>
</comment>
<comment type="catalytic activity">
    <reaction evidence="1">
        <text>acetate + ATP + CoA = acetyl-CoA + AMP + diphosphate</text>
        <dbReference type="Rhea" id="RHEA:23176"/>
        <dbReference type="ChEBI" id="CHEBI:30089"/>
        <dbReference type="ChEBI" id="CHEBI:30616"/>
        <dbReference type="ChEBI" id="CHEBI:33019"/>
        <dbReference type="ChEBI" id="CHEBI:57287"/>
        <dbReference type="ChEBI" id="CHEBI:57288"/>
        <dbReference type="ChEBI" id="CHEBI:456215"/>
        <dbReference type="EC" id="6.2.1.1"/>
    </reaction>
</comment>
<comment type="cofactor">
    <cofactor evidence="1">
        <name>Mg(2+)</name>
        <dbReference type="ChEBI" id="CHEBI:18420"/>
    </cofactor>
</comment>
<comment type="PTM">
    <text evidence="1">Acetylated. Deacetylation by the SIR2-homolog deacetylase activates the enzyme.</text>
</comment>
<comment type="similarity">
    <text evidence="1">Belongs to the ATP-dependent AMP-binding enzyme family.</text>
</comment>
<protein>
    <recommendedName>
        <fullName evidence="1">Acetyl-coenzyme A synthetase</fullName>
        <shortName evidence="1">AcCoA synthetase</shortName>
        <shortName evidence="1">Acs</shortName>
        <ecNumber evidence="1">6.2.1.1</ecNumber>
    </recommendedName>
    <alternativeName>
        <fullName evidence="1">Acetate--CoA ligase</fullName>
    </alternativeName>
    <alternativeName>
        <fullName evidence="1">Acyl-activating enzyme</fullName>
    </alternativeName>
</protein>
<evidence type="ECO:0000255" key="1">
    <source>
        <dbReference type="HAMAP-Rule" id="MF_01123"/>
    </source>
</evidence>
<organism>
    <name type="scientific">Xylella fastidiosa (strain Temecula1 / ATCC 700964)</name>
    <dbReference type="NCBI Taxonomy" id="183190"/>
    <lineage>
        <taxon>Bacteria</taxon>
        <taxon>Pseudomonadati</taxon>
        <taxon>Pseudomonadota</taxon>
        <taxon>Gammaproteobacteria</taxon>
        <taxon>Lysobacterales</taxon>
        <taxon>Lysobacteraceae</taxon>
        <taxon>Xylella</taxon>
    </lineage>
</organism>
<reference key="1">
    <citation type="journal article" date="2003" name="J. Bacteriol.">
        <title>Comparative analyses of the complete genome sequences of Pierce's disease and citrus variegated chlorosis strains of Xylella fastidiosa.</title>
        <authorList>
            <person name="Van Sluys M.A."/>
            <person name="de Oliveira M.C."/>
            <person name="Monteiro-Vitorello C.B."/>
            <person name="Miyaki C.Y."/>
            <person name="Furlan L.R."/>
            <person name="Camargo L.E.A."/>
            <person name="da Silva A.C.R."/>
            <person name="Moon D.H."/>
            <person name="Takita M.A."/>
            <person name="Lemos E.G.M."/>
            <person name="Machado M.A."/>
            <person name="Ferro M.I.T."/>
            <person name="da Silva F.R."/>
            <person name="Goldman M.H.S."/>
            <person name="Goldman G.H."/>
            <person name="Lemos M.V.F."/>
            <person name="El-Dorry H."/>
            <person name="Tsai S.M."/>
            <person name="Carrer H."/>
            <person name="Carraro D.M."/>
            <person name="de Oliveira R.C."/>
            <person name="Nunes L.R."/>
            <person name="Siqueira W.J."/>
            <person name="Coutinho L.L."/>
            <person name="Kimura E.T."/>
            <person name="Ferro E.S."/>
            <person name="Harakava R."/>
            <person name="Kuramae E.E."/>
            <person name="Marino C.L."/>
            <person name="Giglioti E."/>
            <person name="Abreu I.L."/>
            <person name="Alves L.M.C."/>
            <person name="do Amaral A.M."/>
            <person name="Baia G.S."/>
            <person name="Blanco S.R."/>
            <person name="Brito M.S."/>
            <person name="Cannavan F.S."/>
            <person name="Celestino A.V."/>
            <person name="da Cunha A.F."/>
            <person name="Fenille R.C."/>
            <person name="Ferro J.A."/>
            <person name="Formighieri E.F."/>
            <person name="Kishi L.T."/>
            <person name="Leoni S.G."/>
            <person name="Oliveira A.R."/>
            <person name="Rosa V.E. Jr."/>
            <person name="Sassaki F.T."/>
            <person name="Sena J.A.D."/>
            <person name="de Souza A.A."/>
            <person name="Truffi D."/>
            <person name="Tsukumo F."/>
            <person name="Yanai G.M."/>
            <person name="Zaros L.G."/>
            <person name="Civerolo E.L."/>
            <person name="Simpson A.J.G."/>
            <person name="Almeida N.F. Jr."/>
            <person name="Setubal J.C."/>
            <person name="Kitajima J.P."/>
        </authorList>
    </citation>
    <scope>NUCLEOTIDE SEQUENCE [LARGE SCALE GENOMIC DNA]</scope>
    <source>
        <strain>Temecula1 / ATCC 700964</strain>
    </source>
</reference>
<proteinExistence type="inferred from homology"/>
<keyword id="KW-0007">Acetylation</keyword>
<keyword id="KW-0067">ATP-binding</keyword>
<keyword id="KW-0436">Ligase</keyword>
<keyword id="KW-0460">Magnesium</keyword>
<keyword id="KW-0479">Metal-binding</keyword>
<keyword id="KW-0547">Nucleotide-binding</keyword>
<keyword id="KW-1185">Reference proteome</keyword>
<gene>
    <name evidence="1" type="primary">acsA</name>
    <name type="synonym">acs</name>
    <name type="ordered locus">PD_1296</name>
</gene>
<feature type="chain" id="PRO_0000208399" description="Acetyl-coenzyme A synthetase">
    <location>
        <begin position="1"/>
        <end position="647"/>
    </location>
</feature>
<feature type="binding site" evidence="1">
    <location>
        <begin position="190"/>
        <end position="193"/>
    </location>
    <ligand>
        <name>CoA</name>
        <dbReference type="ChEBI" id="CHEBI:57287"/>
    </ligand>
</feature>
<feature type="binding site" evidence="1">
    <location>
        <position position="310"/>
    </location>
    <ligand>
        <name>CoA</name>
        <dbReference type="ChEBI" id="CHEBI:57287"/>
    </ligand>
</feature>
<feature type="binding site" evidence="1">
    <location>
        <begin position="386"/>
        <end position="388"/>
    </location>
    <ligand>
        <name>ATP</name>
        <dbReference type="ChEBI" id="CHEBI:30616"/>
    </ligand>
</feature>
<feature type="binding site" evidence="1">
    <location>
        <begin position="410"/>
        <end position="415"/>
    </location>
    <ligand>
        <name>ATP</name>
        <dbReference type="ChEBI" id="CHEBI:30616"/>
    </ligand>
</feature>
<feature type="binding site" evidence="1">
    <location>
        <position position="499"/>
    </location>
    <ligand>
        <name>ATP</name>
        <dbReference type="ChEBI" id="CHEBI:30616"/>
    </ligand>
</feature>
<feature type="binding site" evidence="1">
    <location>
        <position position="514"/>
    </location>
    <ligand>
        <name>ATP</name>
        <dbReference type="ChEBI" id="CHEBI:30616"/>
    </ligand>
</feature>
<feature type="binding site" evidence="1">
    <location>
        <position position="522"/>
    </location>
    <ligand>
        <name>CoA</name>
        <dbReference type="ChEBI" id="CHEBI:57287"/>
    </ligand>
</feature>
<feature type="binding site" evidence="1">
    <location>
        <position position="525"/>
    </location>
    <ligand>
        <name>ATP</name>
        <dbReference type="ChEBI" id="CHEBI:30616"/>
    </ligand>
</feature>
<feature type="binding site" evidence="1">
    <location>
        <position position="536"/>
    </location>
    <ligand>
        <name>Mg(2+)</name>
        <dbReference type="ChEBI" id="CHEBI:18420"/>
    </ligand>
</feature>
<feature type="binding site" evidence="1">
    <location>
        <position position="538"/>
    </location>
    <ligand>
        <name>Mg(2+)</name>
        <dbReference type="ChEBI" id="CHEBI:18420"/>
    </ligand>
</feature>
<feature type="binding site" evidence="1">
    <location>
        <position position="541"/>
    </location>
    <ligand>
        <name>Mg(2+)</name>
        <dbReference type="ChEBI" id="CHEBI:18420"/>
    </ligand>
</feature>
<feature type="binding site" evidence="1">
    <location>
        <position position="583"/>
    </location>
    <ligand>
        <name>CoA</name>
        <dbReference type="ChEBI" id="CHEBI:57287"/>
    </ligand>
</feature>
<feature type="modified residue" description="N6-acetyllysine" evidence="1">
    <location>
        <position position="608"/>
    </location>
</feature>
<sequence length="647" mass="72222">MSDLYTIDPMLAKDAHIDRAHYKTLYHESIEQPEAFWNKVSQRLEWFKAPTKIKNVSYQLEDVHIRWFEDGELNASVNCLDRHLTLRGDKTALLFEPDAPDAPSSRITYRELYERVCQLGNALRHLGIEKGDRVTIYLPMIPDAVVAILACARIGAIHSVVFGGFAANSIADRVNDCGSKLIITADEGLRGGRKIPLKANVDAALKIHGTQSVETVLVVRHTGSTINMHTPRDRWFHDLVDIQATECAPERMNAEDSLFILYTSGSTGKPKGVLHTTGGYLVYTSYTHETVFDLRENDIYWCTADIGWITGHSYIVYGPLANGTTVLLFEGTPHYPTVSRFWEVIDKHHVTLFYTAPTAIRALMREGDTPVKKTSRKSLRLLGSVGEPINPEAWHWYYTIVGNGRCPIVDTWWQTETGGILITPLIGATDLKPGSVTLPFFGIRPALVDTNGQTLDGPAAGNLVLLDSWPGQMRTLYGDHQRFIDTYFRTYPNTYFTGDGCRRDADGYYWITGRVDDVINISGHRIGTAEIESTLVAHPKVAEAAVVGFPHPIKGQGIYAYVTLITGETPSEALHQELLTWVRKEIGAIAIPDHVQWASNLPKTRSGKIMRRILRKIAENAPDQLGDTSTLADPSIVDLLLNERLKH</sequence>
<name>ACSA_XYLFT</name>